<feature type="chain" id="PRO_0000135460" description="Queuine tRNA-ribosyltransferase">
    <location>
        <begin position="1"/>
        <end position="373"/>
    </location>
</feature>
<feature type="region of interest" description="RNA binding" evidence="1">
    <location>
        <begin position="251"/>
        <end position="257"/>
    </location>
</feature>
<feature type="region of interest" description="RNA binding; important for wobble base 34 recognition" evidence="1">
    <location>
        <begin position="275"/>
        <end position="279"/>
    </location>
</feature>
<feature type="active site" description="Proton acceptor" evidence="1">
    <location>
        <position position="90"/>
    </location>
</feature>
<feature type="active site" description="Nucleophile" evidence="1">
    <location>
        <position position="270"/>
    </location>
</feature>
<feature type="binding site" evidence="1">
    <location>
        <begin position="90"/>
        <end position="94"/>
    </location>
    <ligand>
        <name>substrate</name>
    </ligand>
</feature>
<feature type="binding site" evidence="1">
    <location>
        <position position="144"/>
    </location>
    <ligand>
        <name>substrate</name>
    </ligand>
</feature>
<feature type="binding site" evidence="1">
    <location>
        <position position="193"/>
    </location>
    <ligand>
        <name>substrate</name>
    </ligand>
</feature>
<feature type="binding site" evidence="1">
    <location>
        <position position="220"/>
    </location>
    <ligand>
        <name>substrate</name>
    </ligand>
</feature>
<feature type="binding site" evidence="1">
    <location>
        <position position="308"/>
    </location>
    <ligand>
        <name>Zn(2+)</name>
        <dbReference type="ChEBI" id="CHEBI:29105"/>
    </ligand>
</feature>
<feature type="binding site" evidence="1">
    <location>
        <position position="310"/>
    </location>
    <ligand>
        <name>Zn(2+)</name>
        <dbReference type="ChEBI" id="CHEBI:29105"/>
    </ligand>
</feature>
<feature type="binding site" evidence="1">
    <location>
        <position position="313"/>
    </location>
    <ligand>
        <name>Zn(2+)</name>
        <dbReference type="ChEBI" id="CHEBI:29105"/>
    </ligand>
</feature>
<feature type="binding site" evidence="1">
    <location>
        <position position="339"/>
    </location>
    <ligand>
        <name>Zn(2+)</name>
        <dbReference type="ChEBI" id="CHEBI:29105"/>
    </ligand>
</feature>
<comment type="function">
    <text evidence="1">Catalyzes the base-exchange of a guanine (G) residue with the queuine precursor 7-aminomethyl-7-deazaguanine (PreQ1) at position 34 (anticodon wobble position) in tRNAs with GU(N) anticodons (tRNA-Asp, -Asn, -His and -Tyr). Catalysis occurs through a double-displacement mechanism. The nucleophile active site attacks the C1' of nucleotide 34 to detach the guanine base from the RNA, forming a covalent enzyme-RNA intermediate. The proton acceptor active site deprotonates the incoming PreQ1, allowing a nucleophilic attack on the C1' of the ribose to form the product. After dissociation, two additional enzymatic reactions on the tRNA convert PreQ1 to queuine (Q), resulting in the hypermodified nucleoside queuosine (7-(((4,5-cis-dihydroxy-2-cyclopenten-1-yl)amino)methyl)-7-deazaguanosine).</text>
</comment>
<comment type="catalytic activity">
    <reaction evidence="1">
        <text>7-aminomethyl-7-carbaguanine + guanosine(34) in tRNA = 7-aminomethyl-7-carbaguanosine(34) in tRNA + guanine</text>
        <dbReference type="Rhea" id="RHEA:24104"/>
        <dbReference type="Rhea" id="RHEA-COMP:10341"/>
        <dbReference type="Rhea" id="RHEA-COMP:10342"/>
        <dbReference type="ChEBI" id="CHEBI:16235"/>
        <dbReference type="ChEBI" id="CHEBI:58703"/>
        <dbReference type="ChEBI" id="CHEBI:74269"/>
        <dbReference type="ChEBI" id="CHEBI:82833"/>
        <dbReference type="EC" id="2.4.2.29"/>
    </reaction>
</comment>
<comment type="cofactor">
    <cofactor evidence="1">
        <name>Zn(2+)</name>
        <dbReference type="ChEBI" id="CHEBI:29105"/>
    </cofactor>
    <text evidence="1">Binds 1 zinc ion per subunit.</text>
</comment>
<comment type="pathway">
    <text evidence="1">tRNA modification; tRNA-queuosine biosynthesis.</text>
</comment>
<comment type="subunit">
    <text evidence="1">Homodimer. Within each dimer, one monomer is responsible for RNA recognition and catalysis, while the other monomer binds to the replacement base PreQ1.</text>
</comment>
<comment type="similarity">
    <text evidence="1">Belongs to the queuine tRNA-ribosyltransferase family.</text>
</comment>
<dbReference type="EC" id="2.4.2.29" evidence="1"/>
<dbReference type="EMBL" id="CP000025">
    <property type="protein sequence ID" value="AAW35418.1"/>
    <property type="molecule type" value="Genomic_DNA"/>
</dbReference>
<dbReference type="RefSeq" id="WP_002867922.1">
    <property type="nucleotide sequence ID" value="NC_003912.7"/>
</dbReference>
<dbReference type="SMR" id="Q5HUF2"/>
<dbReference type="KEGG" id="cjr:CJE1090"/>
<dbReference type="HOGENOM" id="CLU_022060_0_1_7"/>
<dbReference type="UniPathway" id="UPA00392"/>
<dbReference type="GO" id="GO:0005829">
    <property type="term" value="C:cytosol"/>
    <property type="evidence" value="ECO:0007669"/>
    <property type="project" value="TreeGrafter"/>
</dbReference>
<dbReference type="GO" id="GO:0046872">
    <property type="term" value="F:metal ion binding"/>
    <property type="evidence" value="ECO:0007669"/>
    <property type="project" value="UniProtKB-KW"/>
</dbReference>
<dbReference type="GO" id="GO:0008479">
    <property type="term" value="F:tRNA-guanosine(34) queuine transglycosylase activity"/>
    <property type="evidence" value="ECO:0007669"/>
    <property type="project" value="UniProtKB-UniRule"/>
</dbReference>
<dbReference type="GO" id="GO:0008616">
    <property type="term" value="P:queuosine biosynthetic process"/>
    <property type="evidence" value="ECO:0007669"/>
    <property type="project" value="UniProtKB-UniRule"/>
</dbReference>
<dbReference type="GO" id="GO:0101030">
    <property type="term" value="P:tRNA-guanine transglycosylation"/>
    <property type="evidence" value="ECO:0007669"/>
    <property type="project" value="InterPro"/>
</dbReference>
<dbReference type="Gene3D" id="3.20.20.105">
    <property type="entry name" value="Queuine tRNA-ribosyltransferase-like"/>
    <property type="match status" value="1"/>
</dbReference>
<dbReference type="HAMAP" id="MF_00168">
    <property type="entry name" value="Q_tRNA_Tgt"/>
    <property type="match status" value="1"/>
</dbReference>
<dbReference type="InterPro" id="IPR004803">
    <property type="entry name" value="TGT"/>
</dbReference>
<dbReference type="InterPro" id="IPR036511">
    <property type="entry name" value="TGT-like_sf"/>
</dbReference>
<dbReference type="InterPro" id="IPR002616">
    <property type="entry name" value="tRNA_ribo_trans-like"/>
</dbReference>
<dbReference type="NCBIfam" id="TIGR00430">
    <property type="entry name" value="Q_tRNA_tgt"/>
    <property type="match status" value="1"/>
</dbReference>
<dbReference type="NCBIfam" id="TIGR00449">
    <property type="entry name" value="tgt_general"/>
    <property type="match status" value="1"/>
</dbReference>
<dbReference type="PANTHER" id="PTHR43530">
    <property type="entry name" value="QUEUINE TRNA-RIBOSYLTRANSFERASE CATALYTIC SUBUNIT 1"/>
    <property type="match status" value="1"/>
</dbReference>
<dbReference type="PANTHER" id="PTHR43530:SF1">
    <property type="entry name" value="QUEUINE TRNA-RIBOSYLTRANSFERASE CATALYTIC SUBUNIT 1"/>
    <property type="match status" value="1"/>
</dbReference>
<dbReference type="Pfam" id="PF01702">
    <property type="entry name" value="TGT"/>
    <property type="match status" value="1"/>
</dbReference>
<dbReference type="SUPFAM" id="SSF51713">
    <property type="entry name" value="tRNA-guanine transglycosylase"/>
    <property type="match status" value="1"/>
</dbReference>
<keyword id="KW-0328">Glycosyltransferase</keyword>
<keyword id="KW-0479">Metal-binding</keyword>
<keyword id="KW-0671">Queuosine biosynthesis</keyword>
<keyword id="KW-0808">Transferase</keyword>
<keyword id="KW-0819">tRNA processing</keyword>
<keyword id="KW-0862">Zinc</keyword>
<evidence type="ECO:0000255" key="1">
    <source>
        <dbReference type="HAMAP-Rule" id="MF_00168"/>
    </source>
</evidence>
<reference key="1">
    <citation type="journal article" date="2005" name="PLoS Biol.">
        <title>Major structural differences and novel potential virulence mechanisms from the genomes of multiple Campylobacter species.</title>
        <authorList>
            <person name="Fouts D.E."/>
            <person name="Mongodin E.F."/>
            <person name="Mandrell R.E."/>
            <person name="Miller W.G."/>
            <person name="Rasko D.A."/>
            <person name="Ravel J."/>
            <person name="Brinkac L.M."/>
            <person name="DeBoy R.T."/>
            <person name="Parker C.T."/>
            <person name="Daugherty S.C."/>
            <person name="Dodson R.J."/>
            <person name="Durkin A.S."/>
            <person name="Madupu R."/>
            <person name="Sullivan S.A."/>
            <person name="Shetty J.U."/>
            <person name="Ayodeji M.A."/>
            <person name="Shvartsbeyn A."/>
            <person name="Schatz M.C."/>
            <person name="Badger J.H."/>
            <person name="Fraser C.M."/>
            <person name="Nelson K.E."/>
        </authorList>
    </citation>
    <scope>NUCLEOTIDE SEQUENCE [LARGE SCALE GENOMIC DNA]</scope>
    <source>
        <strain>RM1221</strain>
    </source>
</reference>
<gene>
    <name evidence="1" type="primary">tgt</name>
    <name type="ordered locus">CJE1090</name>
</gene>
<sequence length="373" mass="42554">MEFKLKHKDGMARVCEITTAHSTFLTPVFMPVGTVGAVKSLDANDMKNELDAKIILANTYHMYLRPTSKVVKDFGGLHGFTKFDRSFLTDSGGFQAFSLSKNSKHFNEGIEFKSHIDGSRHLFTPKSVLDAQYDFNSDIMMILDDLVALPATKERVKISVDRTILWAKEAITYHKNMQNKGIGIGQNIFGIIQGGTDYEERKRCALSLNEMPFDGLAIGGLSVGEENALMYETVQNLNPYLDENRPRYLMGVGTPEDLVENVERGVDMFDCVMPTRNARNGTFFTSFGKFNIKKAEFINDHEVIDPTCSCYTCRNFSRGYLNHLFKAKELTFFRLASLHNLHYYLELARKMREAILNNSFTQFKRNFYHLRGK</sequence>
<proteinExistence type="inferred from homology"/>
<protein>
    <recommendedName>
        <fullName evidence="1">Queuine tRNA-ribosyltransferase</fullName>
        <ecNumber evidence="1">2.4.2.29</ecNumber>
    </recommendedName>
    <alternativeName>
        <fullName evidence="1">Guanine insertion enzyme</fullName>
    </alternativeName>
    <alternativeName>
        <fullName evidence="1">tRNA-guanine transglycosylase</fullName>
    </alternativeName>
</protein>
<accession>Q5HUF2</accession>
<name>TGT_CAMJR</name>
<organism>
    <name type="scientific">Campylobacter jejuni (strain RM1221)</name>
    <dbReference type="NCBI Taxonomy" id="195099"/>
    <lineage>
        <taxon>Bacteria</taxon>
        <taxon>Pseudomonadati</taxon>
        <taxon>Campylobacterota</taxon>
        <taxon>Epsilonproteobacteria</taxon>
        <taxon>Campylobacterales</taxon>
        <taxon>Campylobacteraceae</taxon>
        <taxon>Campylobacter</taxon>
    </lineage>
</organism>